<name>TRMFO_RHOP2</name>
<organism>
    <name type="scientific">Rhodopseudomonas palustris (strain HaA2)</name>
    <dbReference type="NCBI Taxonomy" id="316058"/>
    <lineage>
        <taxon>Bacteria</taxon>
        <taxon>Pseudomonadati</taxon>
        <taxon>Pseudomonadota</taxon>
        <taxon>Alphaproteobacteria</taxon>
        <taxon>Hyphomicrobiales</taxon>
        <taxon>Nitrobacteraceae</taxon>
        <taxon>Rhodopseudomonas</taxon>
    </lineage>
</organism>
<dbReference type="EC" id="2.1.1.74" evidence="1"/>
<dbReference type="EMBL" id="CP000250">
    <property type="protein sequence ID" value="ABD07430.1"/>
    <property type="molecule type" value="Genomic_DNA"/>
</dbReference>
<dbReference type="RefSeq" id="WP_011441615.1">
    <property type="nucleotide sequence ID" value="NC_007778.1"/>
</dbReference>
<dbReference type="SMR" id="Q2IWI0"/>
<dbReference type="STRING" id="316058.RPB_2728"/>
<dbReference type="KEGG" id="rpb:RPB_2728"/>
<dbReference type="eggNOG" id="COG1206">
    <property type="taxonomic scope" value="Bacteria"/>
</dbReference>
<dbReference type="HOGENOM" id="CLU_033057_1_0_5"/>
<dbReference type="OrthoDB" id="9803114at2"/>
<dbReference type="Proteomes" id="UP000008809">
    <property type="component" value="Chromosome"/>
</dbReference>
<dbReference type="GO" id="GO:0005829">
    <property type="term" value="C:cytosol"/>
    <property type="evidence" value="ECO:0007669"/>
    <property type="project" value="TreeGrafter"/>
</dbReference>
<dbReference type="GO" id="GO:0050660">
    <property type="term" value="F:flavin adenine dinucleotide binding"/>
    <property type="evidence" value="ECO:0007669"/>
    <property type="project" value="UniProtKB-UniRule"/>
</dbReference>
<dbReference type="GO" id="GO:0047151">
    <property type="term" value="F:tRNA (uracil(54)-C5)-methyltransferase activity, 5,10-methylenetetrahydrofolate-dependent"/>
    <property type="evidence" value="ECO:0007669"/>
    <property type="project" value="UniProtKB-UniRule"/>
</dbReference>
<dbReference type="GO" id="GO:0030488">
    <property type="term" value="P:tRNA methylation"/>
    <property type="evidence" value="ECO:0007669"/>
    <property type="project" value="TreeGrafter"/>
</dbReference>
<dbReference type="GO" id="GO:0002098">
    <property type="term" value="P:tRNA wobble uridine modification"/>
    <property type="evidence" value="ECO:0007669"/>
    <property type="project" value="TreeGrafter"/>
</dbReference>
<dbReference type="FunFam" id="3.50.50.60:FF:000359">
    <property type="entry name" value="Methylenetetrahydrofolate--tRNA-(uracil-5-)-methyltransferase TrmFO"/>
    <property type="match status" value="1"/>
</dbReference>
<dbReference type="Gene3D" id="3.50.50.60">
    <property type="entry name" value="FAD/NAD(P)-binding domain"/>
    <property type="match status" value="2"/>
</dbReference>
<dbReference type="HAMAP" id="MF_01037">
    <property type="entry name" value="TrmFO"/>
    <property type="match status" value="1"/>
</dbReference>
<dbReference type="InterPro" id="IPR036188">
    <property type="entry name" value="FAD/NAD-bd_sf"/>
</dbReference>
<dbReference type="InterPro" id="IPR002218">
    <property type="entry name" value="MnmG-rel"/>
</dbReference>
<dbReference type="InterPro" id="IPR040131">
    <property type="entry name" value="MnmG_N"/>
</dbReference>
<dbReference type="InterPro" id="IPR004417">
    <property type="entry name" value="TrmFO"/>
</dbReference>
<dbReference type="NCBIfam" id="TIGR00137">
    <property type="entry name" value="gid_trmFO"/>
    <property type="match status" value="1"/>
</dbReference>
<dbReference type="NCBIfam" id="NF003739">
    <property type="entry name" value="PRK05335.1"/>
    <property type="match status" value="1"/>
</dbReference>
<dbReference type="PANTHER" id="PTHR11806">
    <property type="entry name" value="GLUCOSE INHIBITED DIVISION PROTEIN A"/>
    <property type="match status" value="1"/>
</dbReference>
<dbReference type="PANTHER" id="PTHR11806:SF2">
    <property type="entry name" value="METHYLENETETRAHYDROFOLATE--TRNA-(URACIL-5-)-METHYLTRANSFERASE TRMFO"/>
    <property type="match status" value="1"/>
</dbReference>
<dbReference type="Pfam" id="PF01134">
    <property type="entry name" value="GIDA"/>
    <property type="match status" value="1"/>
</dbReference>
<dbReference type="SUPFAM" id="SSF51905">
    <property type="entry name" value="FAD/NAD(P)-binding domain"/>
    <property type="match status" value="1"/>
</dbReference>
<feature type="chain" id="PRO_0000346389" description="Methylenetetrahydrofolate--tRNA-(uracil-5-)-methyltransferase TrmFO">
    <location>
        <begin position="1"/>
        <end position="482"/>
    </location>
</feature>
<feature type="binding site" evidence="1">
    <location>
        <begin position="20"/>
        <end position="25"/>
    </location>
    <ligand>
        <name>FAD</name>
        <dbReference type="ChEBI" id="CHEBI:57692"/>
    </ligand>
</feature>
<comment type="function">
    <text evidence="1">Catalyzes the folate-dependent formation of 5-methyl-uridine at position 54 (M-5-U54) in all tRNAs.</text>
</comment>
<comment type="catalytic activity">
    <reaction evidence="1">
        <text>uridine(54) in tRNA + (6R)-5,10-methylene-5,6,7,8-tetrahydrofolate + NADH + H(+) = 5-methyluridine(54) in tRNA + (6S)-5,6,7,8-tetrahydrofolate + NAD(+)</text>
        <dbReference type="Rhea" id="RHEA:16873"/>
        <dbReference type="Rhea" id="RHEA-COMP:10167"/>
        <dbReference type="Rhea" id="RHEA-COMP:10193"/>
        <dbReference type="ChEBI" id="CHEBI:15378"/>
        <dbReference type="ChEBI" id="CHEBI:15636"/>
        <dbReference type="ChEBI" id="CHEBI:57453"/>
        <dbReference type="ChEBI" id="CHEBI:57540"/>
        <dbReference type="ChEBI" id="CHEBI:57945"/>
        <dbReference type="ChEBI" id="CHEBI:65315"/>
        <dbReference type="ChEBI" id="CHEBI:74447"/>
        <dbReference type="EC" id="2.1.1.74"/>
    </reaction>
</comment>
<comment type="catalytic activity">
    <reaction evidence="1">
        <text>uridine(54) in tRNA + (6R)-5,10-methylene-5,6,7,8-tetrahydrofolate + NADPH + H(+) = 5-methyluridine(54) in tRNA + (6S)-5,6,7,8-tetrahydrofolate + NADP(+)</text>
        <dbReference type="Rhea" id="RHEA:62372"/>
        <dbReference type="Rhea" id="RHEA-COMP:10167"/>
        <dbReference type="Rhea" id="RHEA-COMP:10193"/>
        <dbReference type="ChEBI" id="CHEBI:15378"/>
        <dbReference type="ChEBI" id="CHEBI:15636"/>
        <dbReference type="ChEBI" id="CHEBI:57453"/>
        <dbReference type="ChEBI" id="CHEBI:57783"/>
        <dbReference type="ChEBI" id="CHEBI:58349"/>
        <dbReference type="ChEBI" id="CHEBI:65315"/>
        <dbReference type="ChEBI" id="CHEBI:74447"/>
        <dbReference type="EC" id="2.1.1.74"/>
    </reaction>
</comment>
<comment type="cofactor">
    <cofactor evidence="1">
        <name>FAD</name>
        <dbReference type="ChEBI" id="CHEBI:57692"/>
    </cofactor>
</comment>
<comment type="subcellular location">
    <subcellularLocation>
        <location evidence="1">Cytoplasm</location>
    </subcellularLocation>
</comment>
<comment type="similarity">
    <text evidence="1">Belongs to the MnmG family. TrmFO subfamily.</text>
</comment>
<accession>Q2IWI0</accession>
<proteinExistence type="inferred from homology"/>
<protein>
    <recommendedName>
        <fullName evidence="1">Methylenetetrahydrofolate--tRNA-(uracil-5-)-methyltransferase TrmFO</fullName>
        <ecNumber evidence="1">2.1.1.74</ecNumber>
    </recommendedName>
    <alternativeName>
        <fullName evidence="1">Folate-dependent tRNA (uracil-5-)-methyltransferase</fullName>
    </alternativeName>
    <alternativeName>
        <fullName evidence="1">Folate-dependent tRNA(M-5-U54)-methyltransferase</fullName>
    </alternativeName>
</protein>
<sequence length="482" mass="51234">MIIAAPPPQPASNQPVHVIGGGLAGSEATWQLARAGVRVVLHEMRPHRSTEAHKTDGLAELVCSNSFRSDDAANNAVGLLHAEMRRLGSLVMRAADANQVPAGGALAVDRDGFSAAVTKALAEHPLIEIRREEIAGLPPEDWGNVIVATGPLTSAALAEAVRALTDESALAFFDAIAPIVHRDSIDMSIAWFQSRYDKAGPGGSGADYLNCPMNREQYDAFVDALIAGDKVDFKDWEKDTPYFDGCLPIEVMAERGRETLRHGPMKPVGLTNPHNPTVKAYAIVQLRQDNKLGTLFNMVGFQTKLNYAAQQRVFRTIPGLENAEFARLGGLHRNTFLNSPKLLDAGLRLRAAPRLRFAGQMTGCEGYVESAGIGLVAGLSAAADALGRSMTTPPPTTALGALLGHITGGHIETIDAGPRSFQPMNINFGLFPPLAQAPTHGPDGKKLRGPEKSVAKKQALSARALADLDAWIAASLKLPAAA</sequence>
<keyword id="KW-0963">Cytoplasm</keyword>
<keyword id="KW-0274">FAD</keyword>
<keyword id="KW-0285">Flavoprotein</keyword>
<keyword id="KW-0489">Methyltransferase</keyword>
<keyword id="KW-0520">NAD</keyword>
<keyword id="KW-0521">NADP</keyword>
<keyword id="KW-1185">Reference proteome</keyword>
<keyword id="KW-0808">Transferase</keyword>
<keyword id="KW-0819">tRNA processing</keyword>
<reference key="1">
    <citation type="submission" date="2006-01" db="EMBL/GenBank/DDBJ databases">
        <title>Complete sequence of Rhodopseudomonas palustris HaA2.</title>
        <authorList>
            <consortium name="US DOE Joint Genome Institute"/>
            <person name="Copeland A."/>
            <person name="Lucas S."/>
            <person name="Lapidus A."/>
            <person name="Barry K."/>
            <person name="Detter J.C."/>
            <person name="Glavina T."/>
            <person name="Hammon N."/>
            <person name="Israni S."/>
            <person name="Pitluck S."/>
            <person name="Chain P."/>
            <person name="Malfatti S."/>
            <person name="Shin M."/>
            <person name="Vergez L."/>
            <person name="Schmutz J."/>
            <person name="Larimer F."/>
            <person name="Land M."/>
            <person name="Hauser L."/>
            <person name="Pelletier D.A."/>
            <person name="Kyrpides N."/>
            <person name="Anderson I."/>
            <person name="Oda Y."/>
            <person name="Harwood C.S."/>
            <person name="Richardson P."/>
        </authorList>
    </citation>
    <scope>NUCLEOTIDE SEQUENCE [LARGE SCALE GENOMIC DNA]</scope>
    <source>
        <strain>HaA2</strain>
    </source>
</reference>
<evidence type="ECO:0000255" key="1">
    <source>
        <dbReference type="HAMAP-Rule" id="MF_01037"/>
    </source>
</evidence>
<gene>
    <name evidence="1" type="primary">trmFO</name>
    <name type="ordered locus">RPB_2728</name>
</gene>